<accession>Q85WL2</accession>
<sequence length="514" mass="61067">MEELQGYFKKARSLQQHFLYPLLLQEFIYTLAYDDGLKGSIFYEPIEFFGYDNKSSLVLIKRLITRMYQQNFLIYSVNDSNQNGLRGHINYFYSHFFYSHIVSEGFSVIVEIPFSLRLVSSPKEKEIPKSQNLRSIHSIFPFLEDKLSHLNNVSDILIPHPIHLEILVPILQYWIQDVPSLHLLRFFLHKYHNLNSFIQNNKTIYVFSKENKRLFWFLYNSYVSECEFLLVFLRKQSCYLRSTSSVAFLERSHFYGKMEHIIIVCCNNFQKTLWPFKDPFMHYVRYQGKAILASRGAHLLMKKWRYYLVNFWQYYFHFWSQPYRMHINPLLNYSFYFLGYLSSVLINPYAVKNKMLENSFLIDTVFKKFDTIIPIIPLIGSLSKAKFCTVSGHPISKPVWGDLSDFDIIDRFGRICRNLSHYHSGSSKKQSLYRIKYILRLSCARTLARKHKSTARALLQRLGSGLLEEFFTEEEQVLSFIFPKTTPFPLHGSHKERIWSLDIIRVNDLVNQII</sequence>
<proteinExistence type="inferred from homology"/>
<comment type="function">
    <text evidence="1">Usually encoded in the trnK tRNA gene intron. Probably assists in splicing its own and other chloroplast group II introns.</text>
</comment>
<comment type="subcellular location">
    <subcellularLocation>
        <location>Plastid</location>
        <location>Chloroplast</location>
    </subcellularLocation>
</comment>
<comment type="similarity">
    <text evidence="1">Belongs to the intron maturase 2 family. MatK subfamily.</text>
</comment>
<name>MATK_ERYGA</name>
<protein>
    <recommendedName>
        <fullName evidence="1">Maturase K</fullName>
    </recommendedName>
    <alternativeName>
        <fullName evidence="1">Intron maturase</fullName>
    </alternativeName>
</protein>
<feature type="chain" id="PRO_0000143378" description="Maturase K">
    <location>
        <begin position="1"/>
        <end position="514"/>
    </location>
</feature>
<reference key="1">
    <citation type="journal article" date="2003" name="Syst. Bot.">
        <title>Phylogeny and biogeography of Erythronium (Liliaceae) inferred from chloroplast matK and nuclear rDNA ITS sequences.</title>
        <authorList>
            <person name="Allen G.A."/>
            <person name="Soltis D.E."/>
            <person name="Soltis P.S."/>
        </authorList>
        <dbReference type="AGRICOLA" id="IND43643427"/>
    </citation>
    <scope>NUCLEOTIDE SEQUENCE [GENOMIC DNA]</scope>
</reference>
<gene>
    <name evidence="1" type="primary">matK</name>
</gene>
<organism>
    <name type="scientific">Erythronium grandiflorum</name>
    <name type="common">Yellow avalanche-lily</name>
    <dbReference type="NCBI Taxonomy" id="202130"/>
    <lineage>
        <taxon>Eukaryota</taxon>
        <taxon>Viridiplantae</taxon>
        <taxon>Streptophyta</taxon>
        <taxon>Embryophyta</taxon>
        <taxon>Tracheophyta</taxon>
        <taxon>Spermatophyta</taxon>
        <taxon>Magnoliopsida</taxon>
        <taxon>Liliopsida</taxon>
        <taxon>Liliales</taxon>
        <taxon>Liliaceae</taxon>
        <taxon>Erythronium</taxon>
    </lineage>
</organism>
<evidence type="ECO:0000255" key="1">
    <source>
        <dbReference type="HAMAP-Rule" id="MF_01390"/>
    </source>
</evidence>
<dbReference type="EMBL" id="AF485313">
    <property type="protein sequence ID" value="AAO49064.1"/>
    <property type="molecule type" value="Genomic_DNA"/>
</dbReference>
<dbReference type="GO" id="GO:0009507">
    <property type="term" value="C:chloroplast"/>
    <property type="evidence" value="ECO:0007669"/>
    <property type="project" value="UniProtKB-SubCell"/>
</dbReference>
<dbReference type="GO" id="GO:0003723">
    <property type="term" value="F:RNA binding"/>
    <property type="evidence" value="ECO:0007669"/>
    <property type="project" value="UniProtKB-KW"/>
</dbReference>
<dbReference type="GO" id="GO:0006397">
    <property type="term" value="P:mRNA processing"/>
    <property type="evidence" value="ECO:0007669"/>
    <property type="project" value="UniProtKB-KW"/>
</dbReference>
<dbReference type="GO" id="GO:0008380">
    <property type="term" value="P:RNA splicing"/>
    <property type="evidence" value="ECO:0007669"/>
    <property type="project" value="UniProtKB-UniRule"/>
</dbReference>
<dbReference type="GO" id="GO:0008033">
    <property type="term" value="P:tRNA processing"/>
    <property type="evidence" value="ECO:0007669"/>
    <property type="project" value="UniProtKB-KW"/>
</dbReference>
<dbReference type="HAMAP" id="MF_01390">
    <property type="entry name" value="MatK"/>
    <property type="match status" value="1"/>
</dbReference>
<dbReference type="InterPro" id="IPR024937">
    <property type="entry name" value="Domain_X"/>
</dbReference>
<dbReference type="InterPro" id="IPR002866">
    <property type="entry name" value="Maturase_MatK"/>
</dbReference>
<dbReference type="InterPro" id="IPR024942">
    <property type="entry name" value="Maturase_MatK_N"/>
</dbReference>
<dbReference type="PANTHER" id="PTHR34811">
    <property type="entry name" value="MATURASE K"/>
    <property type="match status" value="1"/>
</dbReference>
<dbReference type="PANTHER" id="PTHR34811:SF1">
    <property type="entry name" value="MATURASE K"/>
    <property type="match status" value="1"/>
</dbReference>
<dbReference type="Pfam" id="PF01348">
    <property type="entry name" value="Intron_maturas2"/>
    <property type="match status" value="1"/>
</dbReference>
<dbReference type="Pfam" id="PF01824">
    <property type="entry name" value="MatK_N"/>
    <property type="match status" value="1"/>
</dbReference>
<keyword id="KW-0150">Chloroplast</keyword>
<keyword id="KW-0507">mRNA processing</keyword>
<keyword id="KW-0934">Plastid</keyword>
<keyword id="KW-0694">RNA-binding</keyword>
<keyword id="KW-0819">tRNA processing</keyword>
<geneLocation type="chloroplast"/>